<proteinExistence type="inferred from homology"/>
<gene>
    <name type="ordered locus">xcc-b100_2016</name>
</gene>
<keyword id="KW-0418">Kinase</keyword>
<keyword id="KW-0547">Nucleotide-binding</keyword>
<keyword id="KW-0723">Serine/threonine-protein kinase</keyword>
<keyword id="KW-0808">Transferase</keyword>
<name>PSRP_XANCB</name>
<accession>B0RSD4</accession>
<comment type="function">
    <text evidence="1">Bifunctional serine/threonine kinase and phosphorylase involved in the regulation of the phosphoenolpyruvate synthase (PEPS) by catalyzing its phosphorylation/dephosphorylation.</text>
</comment>
<comment type="catalytic activity">
    <reaction evidence="1">
        <text>[pyruvate, water dikinase] + ADP = [pyruvate, water dikinase]-phosphate + AMP + H(+)</text>
        <dbReference type="Rhea" id="RHEA:46020"/>
        <dbReference type="Rhea" id="RHEA-COMP:11425"/>
        <dbReference type="Rhea" id="RHEA-COMP:11426"/>
        <dbReference type="ChEBI" id="CHEBI:15378"/>
        <dbReference type="ChEBI" id="CHEBI:43176"/>
        <dbReference type="ChEBI" id="CHEBI:68546"/>
        <dbReference type="ChEBI" id="CHEBI:456215"/>
        <dbReference type="ChEBI" id="CHEBI:456216"/>
        <dbReference type="EC" id="2.7.11.33"/>
    </reaction>
</comment>
<comment type="catalytic activity">
    <reaction evidence="1">
        <text>[pyruvate, water dikinase]-phosphate + phosphate + H(+) = [pyruvate, water dikinase] + diphosphate</text>
        <dbReference type="Rhea" id="RHEA:48580"/>
        <dbReference type="Rhea" id="RHEA-COMP:11425"/>
        <dbReference type="Rhea" id="RHEA-COMP:11426"/>
        <dbReference type="ChEBI" id="CHEBI:15378"/>
        <dbReference type="ChEBI" id="CHEBI:33019"/>
        <dbReference type="ChEBI" id="CHEBI:43176"/>
        <dbReference type="ChEBI" id="CHEBI:43474"/>
        <dbReference type="ChEBI" id="CHEBI:68546"/>
        <dbReference type="EC" id="2.7.4.28"/>
    </reaction>
</comment>
<comment type="similarity">
    <text evidence="1">Belongs to the pyruvate, phosphate/water dikinase regulatory protein family. PSRP subfamily.</text>
</comment>
<sequence length="273" mass="30853">MSTIRPVFYVSDGTGITAETIGHSLLTQFSGFNFVTDRMSFIDDADKARDAALRVRAAGERYQVRPVVVNSCVDPQLSMILAESGALMLDVFAPFIEPLERELNAPRHSRVGRAHGMVDFETYHRRINAMNFALSHDDGIALNYDEADVILVAVSRAGKTPTCIYLALHYGIRAANYPLTEEDLESERLPPRLRNYRSKLFGLTIDPERLQQIRQERRANSRYSAAETCRREVATAERMFQMERIPTLSTTNTSIEEISSKVLSTLGLQREMF</sequence>
<reference key="1">
    <citation type="journal article" date="2008" name="J. Biotechnol.">
        <title>The genome of Xanthomonas campestris pv. campestris B100 and its use for the reconstruction of metabolic pathways involved in xanthan biosynthesis.</title>
        <authorList>
            <person name="Vorhoelter F.-J."/>
            <person name="Schneiker S."/>
            <person name="Goesmann A."/>
            <person name="Krause L."/>
            <person name="Bekel T."/>
            <person name="Kaiser O."/>
            <person name="Linke B."/>
            <person name="Patschkowski T."/>
            <person name="Rueckert C."/>
            <person name="Schmid J."/>
            <person name="Sidhu V.K."/>
            <person name="Sieber V."/>
            <person name="Tauch A."/>
            <person name="Watt S.A."/>
            <person name="Weisshaar B."/>
            <person name="Becker A."/>
            <person name="Niehaus K."/>
            <person name="Puehler A."/>
        </authorList>
    </citation>
    <scope>NUCLEOTIDE SEQUENCE [LARGE SCALE GENOMIC DNA]</scope>
    <source>
        <strain>B100</strain>
    </source>
</reference>
<evidence type="ECO:0000255" key="1">
    <source>
        <dbReference type="HAMAP-Rule" id="MF_01062"/>
    </source>
</evidence>
<feature type="chain" id="PRO_1000136504" description="Putative phosphoenolpyruvate synthase regulatory protein">
    <location>
        <begin position="1"/>
        <end position="273"/>
    </location>
</feature>
<feature type="binding site" evidence="1">
    <location>
        <begin position="153"/>
        <end position="160"/>
    </location>
    <ligand>
        <name>ADP</name>
        <dbReference type="ChEBI" id="CHEBI:456216"/>
    </ligand>
</feature>
<organism>
    <name type="scientific">Xanthomonas campestris pv. campestris (strain B100)</name>
    <dbReference type="NCBI Taxonomy" id="509169"/>
    <lineage>
        <taxon>Bacteria</taxon>
        <taxon>Pseudomonadati</taxon>
        <taxon>Pseudomonadota</taxon>
        <taxon>Gammaproteobacteria</taxon>
        <taxon>Lysobacterales</taxon>
        <taxon>Lysobacteraceae</taxon>
        <taxon>Xanthomonas</taxon>
    </lineage>
</organism>
<dbReference type="EC" id="2.7.11.33" evidence="1"/>
<dbReference type="EC" id="2.7.4.28" evidence="1"/>
<dbReference type="EMBL" id="AM920689">
    <property type="protein sequence ID" value="CAP51369.1"/>
    <property type="molecule type" value="Genomic_DNA"/>
</dbReference>
<dbReference type="SMR" id="B0RSD4"/>
<dbReference type="KEGG" id="xca:xcc-b100_2016"/>
<dbReference type="HOGENOM" id="CLU_046206_1_0_6"/>
<dbReference type="Proteomes" id="UP000001188">
    <property type="component" value="Chromosome"/>
</dbReference>
<dbReference type="GO" id="GO:0043531">
    <property type="term" value="F:ADP binding"/>
    <property type="evidence" value="ECO:0007669"/>
    <property type="project" value="UniProtKB-UniRule"/>
</dbReference>
<dbReference type="GO" id="GO:0005524">
    <property type="term" value="F:ATP binding"/>
    <property type="evidence" value="ECO:0007669"/>
    <property type="project" value="InterPro"/>
</dbReference>
<dbReference type="GO" id="GO:0016776">
    <property type="term" value="F:phosphotransferase activity, phosphate group as acceptor"/>
    <property type="evidence" value="ECO:0007669"/>
    <property type="project" value="UniProtKB-UniRule"/>
</dbReference>
<dbReference type="GO" id="GO:0004674">
    <property type="term" value="F:protein serine/threonine kinase activity"/>
    <property type="evidence" value="ECO:0007669"/>
    <property type="project" value="UniProtKB-UniRule"/>
</dbReference>
<dbReference type="HAMAP" id="MF_01062">
    <property type="entry name" value="PSRP"/>
    <property type="match status" value="1"/>
</dbReference>
<dbReference type="InterPro" id="IPR005177">
    <property type="entry name" value="Kinase-pyrophosphorylase"/>
</dbReference>
<dbReference type="InterPro" id="IPR026530">
    <property type="entry name" value="PSRP"/>
</dbReference>
<dbReference type="NCBIfam" id="NF003742">
    <property type="entry name" value="PRK05339.1"/>
    <property type="match status" value="1"/>
</dbReference>
<dbReference type="PANTHER" id="PTHR31756">
    <property type="entry name" value="PYRUVATE, PHOSPHATE DIKINASE REGULATORY PROTEIN 1, CHLOROPLASTIC"/>
    <property type="match status" value="1"/>
</dbReference>
<dbReference type="PANTHER" id="PTHR31756:SF3">
    <property type="entry name" value="PYRUVATE, PHOSPHATE DIKINASE REGULATORY PROTEIN 1, CHLOROPLASTIC"/>
    <property type="match status" value="1"/>
</dbReference>
<dbReference type="Pfam" id="PF03618">
    <property type="entry name" value="Kinase-PPPase"/>
    <property type="match status" value="1"/>
</dbReference>
<protein>
    <recommendedName>
        <fullName evidence="1">Putative phosphoenolpyruvate synthase regulatory protein</fullName>
        <shortName evidence="1">PEP synthase regulatory protein</shortName>
        <shortName evidence="1">PSRP</shortName>
        <ecNumber evidence="1">2.7.11.33</ecNumber>
        <ecNumber evidence="1">2.7.4.28</ecNumber>
    </recommendedName>
    <alternativeName>
        <fullName evidence="1">Pyruvate, water dikinase regulatory protein</fullName>
    </alternativeName>
</protein>